<dbReference type="EC" id="4.3.2.1" evidence="1"/>
<dbReference type="EMBL" id="AP007281">
    <property type="protein sequence ID" value="BAG25219.1"/>
    <property type="molecule type" value="Genomic_DNA"/>
</dbReference>
<dbReference type="RefSeq" id="WP_003668134.1">
    <property type="nucleotide sequence ID" value="NC_010609.1"/>
</dbReference>
<dbReference type="SMR" id="B2G6Y7"/>
<dbReference type="KEGG" id="lrf:LAR_0703"/>
<dbReference type="HOGENOM" id="CLU_027272_2_3_9"/>
<dbReference type="UniPathway" id="UPA00068">
    <property type="reaction ID" value="UER00114"/>
</dbReference>
<dbReference type="GO" id="GO:0005829">
    <property type="term" value="C:cytosol"/>
    <property type="evidence" value="ECO:0007669"/>
    <property type="project" value="TreeGrafter"/>
</dbReference>
<dbReference type="GO" id="GO:0004056">
    <property type="term" value="F:argininosuccinate lyase activity"/>
    <property type="evidence" value="ECO:0007669"/>
    <property type="project" value="UniProtKB-UniRule"/>
</dbReference>
<dbReference type="GO" id="GO:0042450">
    <property type="term" value="P:arginine biosynthetic process via ornithine"/>
    <property type="evidence" value="ECO:0007669"/>
    <property type="project" value="InterPro"/>
</dbReference>
<dbReference type="GO" id="GO:0006526">
    <property type="term" value="P:L-arginine biosynthetic process"/>
    <property type="evidence" value="ECO:0007669"/>
    <property type="project" value="UniProtKB-UniRule"/>
</dbReference>
<dbReference type="CDD" id="cd01359">
    <property type="entry name" value="Argininosuccinate_lyase"/>
    <property type="match status" value="1"/>
</dbReference>
<dbReference type="FunFam" id="1.10.275.10:FF:000002">
    <property type="entry name" value="Argininosuccinate lyase"/>
    <property type="match status" value="1"/>
</dbReference>
<dbReference type="FunFam" id="1.10.40.30:FF:000001">
    <property type="entry name" value="Argininosuccinate lyase"/>
    <property type="match status" value="1"/>
</dbReference>
<dbReference type="FunFam" id="1.20.200.10:FF:000002">
    <property type="entry name" value="Argininosuccinate lyase"/>
    <property type="match status" value="1"/>
</dbReference>
<dbReference type="Gene3D" id="1.10.40.30">
    <property type="entry name" value="Fumarase/aspartase (C-terminal domain)"/>
    <property type="match status" value="1"/>
</dbReference>
<dbReference type="Gene3D" id="1.20.200.10">
    <property type="entry name" value="Fumarase/aspartase (Central domain)"/>
    <property type="match status" value="1"/>
</dbReference>
<dbReference type="Gene3D" id="1.10.275.10">
    <property type="entry name" value="Fumarase/aspartase (N-terminal domain)"/>
    <property type="match status" value="1"/>
</dbReference>
<dbReference type="HAMAP" id="MF_00006">
    <property type="entry name" value="Arg_succ_lyase"/>
    <property type="match status" value="1"/>
</dbReference>
<dbReference type="InterPro" id="IPR029419">
    <property type="entry name" value="Arg_succ_lyase_C"/>
</dbReference>
<dbReference type="InterPro" id="IPR009049">
    <property type="entry name" value="Argininosuccinate_lyase"/>
</dbReference>
<dbReference type="InterPro" id="IPR024083">
    <property type="entry name" value="Fumarase/histidase_N"/>
</dbReference>
<dbReference type="InterPro" id="IPR020557">
    <property type="entry name" value="Fumarate_lyase_CS"/>
</dbReference>
<dbReference type="InterPro" id="IPR000362">
    <property type="entry name" value="Fumarate_lyase_fam"/>
</dbReference>
<dbReference type="InterPro" id="IPR022761">
    <property type="entry name" value="Fumarate_lyase_N"/>
</dbReference>
<dbReference type="InterPro" id="IPR008948">
    <property type="entry name" value="L-Aspartase-like"/>
</dbReference>
<dbReference type="NCBIfam" id="TIGR00838">
    <property type="entry name" value="argH"/>
    <property type="match status" value="1"/>
</dbReference>
<dbReference type="PANTHER" id="PTHR43814">
    <property type="entry name" value="ARGININOSUCCINATE LYASE"/>
    <property type="match status" value="1"/>
</dbReference>
<dbReference type="PANTHER" id="PTHR43814:SF1">
    <property type="entry name" value="ARGININOSUCCINATE LYASE"/>
    <property type="match status" value="1"/>
</dbReference>
<dbReference type="Pfam" id="PF14698">
    <property type="entry name" value="ASL_C2"/>
    <property type="match status" value="1"/>
</dbReference>
<dbReference type="Pfam" id="PF00206">
    <property type="entry name" value="Lyase_1"/>
    <property type="match status" value="1"/>
</dbReference>
<dbReference type="PRINTS" id="PR00145">
    <property type="entry name" value="ARGSUCLYASE"/>
</dbReference>
<dbReference type="PRINTS" id="PR00149">
    <property type="entry name" value="FUMRATELYASE"/>
</dbReference>
<dbReference type="SUPFAM" id="SSF48557">
    <property type="entry name" value="L-aspartase-like"/>
    <property type="match status" value="1"/>
</dbReference>
<dbReference type="PROSITE" id="PS00163">
    <property type="entry name" value="FUMARATE_LYASES"/>
    <property type="match status" value="1"/>
</dbReference>
<sequence>MPIKRMWGGRFEEAGDQLVNQFNASISFDQEMAQEDIEGSLAHVKMLKETQILSAEDADKIIAGLKKLRERLTSEGLPFSIDNEDIHMNIEALLTEEIGPVAGKLHTGRSRNDQVATDLHLYVKKRLPIIINELKKLQAELVDKAAENVETIMPGYTHMQHAQPISYGHYLMAYFQMFQRDVERFEFNQQHTDLSPLGAAALAGTTFPIDRQLSAKYLGFAGPYHNSLDAVSDRDFALEFLSNASILMMHLSRLCEELIYWCSYEFGYLELADSYSTGSSIMPQKKNPDMAELIRGKVGRVYGDLFSLLTTMKGLPLAYNKDMQEDKEGLFDAVKTILPSIKIMTGMIATLQVKKEAMEHATHHDFSNATELADYLATKGIPFREAHEIVGELVLKGLKTGTNLVDIPLDEYKKISPKIEEDVYTCLQPKVAVERRNSYGGTGFDQVRQQIKDAKKILEGK</sequence>
<feature type="chain" id="PRO_1000089089" description="Argininosuccinate lyase">
    <location>
        <begin position="1"/>
        <end position="461"/>
    </location>
</feature>
<gene>
    <name evidence="1" type="primary">argH</name>
    <name type="ordered locus">LAR_0703</name>
</gene>
<reference key="1">
    <citation type="journal article" date="2008" name="DNA Res.">
        <title>Comparative genome analysis of Lactobacillus reuteri and Lactobacillus fermentum reveal a genomic island for reuterin and cobalamin production.</title>
        <authorList>
            <person name="Morita H."/>
            <person name="Toh H."/>
            <person name="Fukuda S."/>
            <person name="Horikawa H."/>
            <person name="Oshima K."/>
            <person name="Suzuki T."/>
            <person name="Murakami M."/>
            <person name="Hisamatsu S."/>
            <person name="Kato Y."/>
            <person name="Takizawa T."/>
            <person name="Fukuoka H."/>
            <person name="Yoshimura T."/>
            <person name="Itoh K."/>
            <person name="O'Sullivan D.J."/>
            <person name="McKay L.L."/>
            <person name="Ohno H."/>
            <person name="Kikuchi J."/>
            <person name="Masaoka T."/>
            <person name="Hattori M."/>
        </authorList>
    </citation>
    <scope>NUCLEOTIDE SEQUENCE [LARGE SCALE GENOMIC DNA]</scope>
    <source>
        <strain>JCM 1112</strain>
    </source>
</reference>
<keyword id="KW-0028">Amino-acid biosynthesis</keyword>
<keyword id="KW-0055">Arginine biosynthesis</keyword>
<keyword id="KW-0963">Cytoplasm</keyword>
<keyword id="KW-0456">Lyase</keyword>
<evidence type="ECO:0000255" key="1">
    <source>
        <dbReference type="HAMAP-Rule" id="MF_00006"/>
    </source>
</evidence>
<name>ARLY_LIMRJ</name>
<protein>
    <recommendedName>
        <fullName evidence="1">Argininosuccinate lyase</fullName>
        <shortName evidence="1">ASAL</shortName>
        <ecNumber evidence="1">4.3.2.1</ecNumber>
    </recommendedName>
    <alternativeName>
        <fullName evidence="1">Arginosuccinase</fullName>
    </alternativeName>
</protein>
<proteinExistence type="inferred from homology"/>
<accession>B2G6Y7</accession>
<comment type="catalytic activity">
    <reaction evidence="1">
        <text>2-(N(omega)-L-arginino)succinate = fumarate + L-arginine</text>
        <dbReference type="Rhea" id="RHEA:24020"/>
        <dbReference type="ChEBI" id="CHEBI:29806"/>
        <dbReference type="ChEBI" id="CHEBI:32682"/>
        <dbReference type="ChEBI" id="CHEBI:57472"/>
        <dbReference type="EC" id="4.3.2.1"/>
    </reaction>
</comment>
<comment type="pathway">
    <text evidence="1">Amino-acid biosynthesis; L-arginine biosynthesis; L-arginine from L-ornithine and carbamoyl phosphate: step 3/3.</text>
</comment>
<comment type="subcellular location">
    <subcellularLocation>
        <location evidence="1">Cytoplasm</location>
    </subcellularLocation>
</comment>
<comment type="similarity">
    <text evidence="1">Belongs to the lyase 1 family. Argininosuccinate lyase subfamily.</text>
</comment>
<organism>
    <name type="scientific">Limosilactobacillus reuteri subsp. reuteri (strain JCM 1112)</name>
    <name type="common">Lactobacillus reuteri</name>
    <dbReference type="NCBI Taxonomy" id="557433"/>
    <lineage>
        <taxon>Bacteria</taxon>
        <taxon>Bacillati</taxon>
        <taxon>Bacillota</taxon>
        <taxon>Bacilli</taxon>
        <taxon>Lactobacillales</taxon>
        <taxon>Lactobacillaceae</taxon>
        <taxon>Limosilactobacillus</taxon>
    </lineage>
</organism>